<organism>
    <name type="scientific">Lepidium virginicum</name>
    <name type="common">Virginia pepperweed</name>
    <dbReference type="NCBI Taxonomy" id="59292"/>
    <lineage>
        <taxon>Eukaryota</taxon>
        <taxon>Viridiplantae</taxon>
        <taxon>Streptophyta</taxon>
        <taxon>Embryophyta</taxon>
        <taxon>Tracheophyta</taxon>
        <taxon>Spermatophyta</taxon>
        <taxon>Magnoliopsida</taxon>
        <taxon>eudicotyledons</taxon>
        <taxon>Gunneridae</taxon>
        <taxon>Pentapetalae</taxon>
        <taxon>rosids</taxon>
        <taxon>malvids</taxon>
        <taxon>Brassicales</taxon>
        <taxon>Brassicaceae</taxon>
        <taxon>Lepidieae</taxon>
        <taxon>Lepidium</taxon>
    </lineage>
</organism>
<sequence length="746" mass="85246">MEHTYQYSWIIPFIPLPVPILLGVGLLLFPTATKNLRRMWTFLSIFLLSIVMIFSLYLSIQQIFVSCIHQNVWSWTINNEFSFEFGYFIDPLTSIMSILISTVGILVLIYSDNYMSHDQGYLRFFAYMGFFNTSMLGLVTSSNLIQVYFFWELVGMCSYLLIGFWFTRPIAANACQKAFVTNRVGDFGLLLGILGLYWITGSFEFQDLFEIFNNLILNNRVNLLFLTLCAFLLFVGPIAKSAQFPLHVWLPDAMEGPTPISALIHAATMVAAGIFLVARLLPLFIVIPSIMYIISLIGIITVLLGATLALAQKDIKRGLAYSTMSQLGYMMLALGMGSYRSALFHLITHAYSKALLFLGSGSIIHSMEAIVGYSPDKSQNMILMGGLTKHVPITKTAFLIGTLSLCGIPPLACFWSKDEILNDSLLFSPIFAIIACSTAGLTAFYMFRIYLLTFEGHLNTYFINYSGKKSSSFYSISLWGKEEEKKLNRNFGLVPLLTMNNTKRASFFCKKTYKISNNVRNQTFITVENFGLNTRTFYYPHESDNTILFPMLVLLLFTLFIGAIGIPFNQEGIDFDILSKLFTPSINLLHQNSENLVDWYEFFRNATFSVSIAFFGIFIAYCLYKPFYSSLLNLTLLNLFQKWNSKRIRWEKLINFVYNWSYNRGYIDAFFKTALIESIRRLAKQTNFFDKRIIDGITNGVGITSFFVGEVTKYIGGSRISSYLFLYLSYVLIFLIILFFFYFEKF</sequence>
<reference key="1">
    <citation type="submission" date="2007-03" db="EMBL/GenBank/DDBJ databases">
        <title>Sequencing analysis of Lepidium virginicum JO26 chloroplast DNA.</title>
        <authorList>
            <person name="Hosouchi T."/>
            <person name="Tsuruoka H."/>
            <person name="Kotani H."/>
        </authorList>
    </citation>
    <scope>NUCLEOTIDE SEQUENCE [LARGE SCALE GENOMIC DNA]</scope>
</reference>
<geneLocation type="chloroplast"/>
<feature type="chain" id="PRO_0000360944" description="NAD(P)H-quinone oxidoreductase subunit 5, chloroplastic">
    <location>
        <begin position="1"/>
        <end position="746"/>
    </location>
</feature>
<feature type="transmembrane region" description="Helical" evidence="2">
    <location>
        <begin position="9"/>
        <end position="29"/>
    </location>
</feature>
<feature type="transmembrane region" description="Helical" evidence="2">
    <location>
        <begin position="40"/>
        <end position="60"/>
    </location>
</feature>
<feature type="transmembrane region" description="Helical" evidence="2">
    <location>
        <begin position="89"/>
        <end position="109"/>
    </location>
</feature>
<feature type="transmembrane region" description="Helical" evidence="2">
    <location>
        <begin position="125"/>
        <end position="145"/>
    </location>
</feature>
<feature type="transmembrane region" description="Helical" evidence="2">
    <location>
        <begin position="147"/>
        <end position="167"/>
    </location>
</feature>
<feature type="transmembrane region" description="Helical" evidence="2">
    <location>
        <begin position="185"/>
        <end position="205"/>
    </location>
</feature>
<feature type="transmembrane region" description="Helical" evidence="2">
    <location>
        <begin position="221"/>
        <end position="241"/>
    </location>
</feature>
<feature type="transmembrane region" description="Helical" evidence="2">
    <location>
        <begin position="258"/>
        <end position="278"/>
    </location>
</feature>
<feature type="transmembrane region" description="Helical" evidence="2">
    <location>
        <begin position="280"/>
        <end position="300"/>
    </location>
</feature>
<feature type="transmembrane region" description="Helical" evidence="2">
    <location>
        <begin position="327"/>
        <end position="347"/>
    </location>
</feature>
<feature type="transmembrane region" description="Helical" evidence="2">
    <location>
        <begin position="354"/>
        <end position="374"/>
    </location>
</feature>
<feature type="transmembrane region" description="Helical" evidence="2">
    <location>
        <begin position="396"/>
        <end position="416"/>
    </location>
</feature>
<feature type="transmembrane region" description="Helical" evidence="2">
    <location>
        <begin position="425"/>
        <end position="445"/>
    </location>
</feature>
<feature type="transmembrane region" description="Helical" evidence="2">
    <location>
        <begin position="547"/>
        <end position="567"/>
    </location>
</feature>
<feature type="transmembrane region" description="Helical" evidence="2">
    <location>
        <begin position="608"/>
        <end position="628"/>
    </location>
</feature>
<feature type="transmembrane region" description="Helical" evidence="2">
    <location>
        <begin position="723"/>
        <end position="743"/>
    </location>
</feature>
<comment type="function">
    <text evidence="1">NDH shuttles electrons from NAD(P)H:plastoquinone, via FMN and iron-sulfur (Fe-S) centers, to quinones in the photosynthetic chain and possibly in a chloroplast respiratory chain. The immediate electron acceptor for the enzyme in this species is believed to be plastoquinone. Couples the redox reaction to proton translocation, and thus conserves the redox energy in a proton gradient (By similarity).</text>
</comment>
<comment type="catalytic activity">
    <reaction>
        <text>a plastoquinone + NADH + (n+1) H(+)(in) = a plastoquinol + NAD(+) + n H(+)(out)</text>
        <dbReference type="Rhea" id="RHEA:42608"/>
        <dbReference type="Rhea" id="RHEA-COMP:9561"/>
        <dbReference type="Rhea" id="RHEA-COMP:9562"/>
        <dbReference type="ChEBI" id="CHEBI:15378"/>
        <dbReference type="ChEBI" id="CHEBI:17757"/>
        <dbReference type="ChEBI" id="CHEBI:57540"/>
        <dbReference type="ChEBI" id="CHEBI:57945"/>
        <dbReference type="ChEBI" id="CHEBI:62192"/>
    </reaction>
</comment>
<comment type="catalytic activity">
    <reaction>
        <text>a plastoquinone + NADPH + (n+1) H(+)(in) = a plastoquinol + NADP(+) + n H(+)(out)</text>
        <dbReference type="Rhea" id="RHEA:42612"/>
        <dbReference type="Rhea" id="RHEA-COMP:9561"/>
        <dbReference type="Rhea" id="RHEA-COMP:9562"/>
        <dbReference type="ChEBI" id="CHEBI:15378"/>
        <dbReference type="ChEBI" id="CHEBI:17757"/>
        <dbReference type="ChEBI" id="CHEBI:57783"/>
        <dbReference type="ChEBI" id="CHEBI:58349"/>
        <dbReference type="ChEBI" id="CHEBI:62192"/>
    </reaction>
</comment>
<comment type="subunit">
    <text evidence="1">NDH is composed of at least 16 different subunits, 5 of which are encoded in the nucleus.</text>
</comment>
<comment type="subcellular location">
    <subcellularLocation>
        <location evidence="1">Plastid</location>
        <location evidence="1">Chloroplast thylakoid membrane</location>
        <topology evidence="1">Multi-pass membrane protein</topology>
    </subcellularLocation>
</comment>
<comment type="similarity">
    <text evidence="3">Belongs to the complex I subunit 5 family.</text>
</comment>
<accession>A4QLF6</accession>
<gene>
    <name type="primary">ndhF</name>
</gene>
<evidence type="ECO:0000250" key="1"/>
<evidence type="ECO:0000255" key="2"/>
<evidence type="ECO:0000305" key="3"/>
<proteinExistence type="inferred from homology"/>
<name>NU5C_LEPVR</name>
<dbReference type="EC" id="7.1.1.-"/>
<dbReference type="EMBL" id="AP009374">
    <property type="protein sequence ID" value="BAF50511.1"/>
    <property type="molecule type" value="Genomic_DNA"/>
</dbReference>
<dbReference type="RefSeq" id="YP_001123686.1">
    <property type="nucleotide sequence ID" value="NC_009273.1"/>
</dbReference>
<dbReference type="SMR" id="A4QLF6"/>
<dbReference type="GeneID" id="4961953"/>
<dbReference type="GO" id="GO:0009535">
    <property type="term" value="C:chloroplast thylakoid membrane"/>
    <property type="evidence" value="ECO:0007669"/>
    <property type="project" value="UniProtKB-SubCell"/>
</dbReference>
<dbReference type="GO" id="GO:0008137">
    <property type="term" value="F:NADH dehydrogenase (ubiquinone) activity"/>
    <property type="evidence" value="ECO:0007669"/>
    <property type="project" value="InterPro"/>
</dbReference>
<dbReference type="GO" id="GO:0048038">
    <property type="term" value="F:quinone binding"/>
    <property type="evidence" value="ECO:0007669"/>
    <property type="project" value="UniProtKB-KW"/>
</dbReference>
<dbReference type="GO" id="GO:0042773">
    <property type="term" value="P:ATP synthesis coupled electron transport"/>
    <property type="evidence" value="ECO:0007669"/>
    <property type="project" value="InterPro"/>
</dbReference>
<dbReference type="GO" id="GO:0015990">
    <property type="term" value="P:electron transport coupled proton transport"/>
    <property type="evidence" value="ECO:0007669"/>
    <property type="project" value="TreeGrafter"/>
</dbReference>
<dbReference type="Gene3D" id="1.20.5.2700">
    <property type="match status" value="1"/>
</dbReference>
<dbReference type="InterPro" id="IPR002128">
    <property type="entry name" value="NADH_UbQ_OxRdtase_chlpt_su5_C"/>
</dbReference>
<dbReference type="InterPro" id="IPR018393">
    <property type="entry name" value="NADHpl_OxRdtase_5_subgr"/>
</dbReference>
<dbReference type="InterPro" id="IPR001750">
    <property type="entry name" value="ND/Mrp_TM"/>
</dbReference>
<dbReference type="InterPro" id="IPR003945">
    <property type="entry name" value="NU5C-like"/>
</dbReference>
<dbReference type="InterPro" id="IPR001516">
    <property type="entry name" value="Proton_antipo_N"/>
</dbReference>
<dbReference type="NCBIfam" id="TIGR01974">
    <property type="entry name" value="NDH_I_L"/>
    <property type="match status" value="1"/>
</dbReference>
<dbReference type="NCBIfam" id="NF005141">
    <property type="entry name" value="PRK06590.1"/>
    <property type="match status" value="1"/>
</dbReference>
<dbReference type="PANTHER" id="PTHR42829">
    <property type="entry name" value="NADH-UBIQUINONE OXIDOREDUCTASE CHAIN 5"/>
    <property type="match status" value="1"/>
</dbReference>
<dbReference type="PANTHER" id="PTHR42829:SF2">
    <property type="entry name" value="NADH-UBIQUINONE OXIDOREDUCTASE CHAIN 5"/>
    <property type="match status" value="1"/>
</dbReference>
<dbReference type="Pfam" id="PF01010">
    <property type="entry name" value="Proton_antipo_C"/>
    <property type="match status" value="1"/>
</dbReference>
<dbReference type="Pfam" id="PF00361">
    <property type="entry name" value="Proton_antipo_M"/>
    <property type="match status" value="1"/>
</dbReference>
<dbReference type="Pfam" id="PF00662">
    <property type="entry name" value="Proton_antipo_N"/>
    <property type="match status" value="1"/>
</dbReference>
<dbReference type="PRINTS" id="PR01434">
    <property type="entry name" value="NADHDHGNASE5"/>
</dbReference>
<dbReference type="PRINTS" id="PR01435">
    <property type="entry name" value="NPOXDRDTASE5"/>
</dbReference>
<keyword id="KW-0150">Chloroplast</keyword>
<keyword id="KW-0472">Membrane</keyword>
<keyword id="KW-0520">NAD</keyword>
<keyword id="KW-0521">NADP</keyword>
<keyword id="KW-0934">Plastid</keyword>
<keyword id="KW-0618">Plastoquinone</keyword>
<keyword id="KW-0874">Quinone</keyword>
<keyword id="KW-0793">Thylakoid</keyword>
<keyword id="KW-1278">Translocase</keyword>
<keyword id="KW-0812">Transmembrane</keyword>
<keyword id="KW-1133">Transmembrane helix</keyword>
<keyword id="KW-0813">Transport</keyword>
<protein>
    <recommendedName>
        <fullName>NAD(P)H-quinone oxidoreductase subunit 5, chloroplastic</fullName>
        <ecNumber>7.1.1.-</ecNumber>
    </recommendedName>
    <alternativeName>
        <fullName>NAD(P)H dehydrogenase subunit 5</fullName>
    </alternativeName>
    <alternativeName>
        <fullName>NADH-plastoquinone oxidoreductase subunit 5</fullName>
    </alternativeName>
</protein>